<dbReference type="EC" id="3.1.1.4"/>
<dbReference type="EMBL" id="GQ406049">
    <property type="protein sequence ID" value="ACV87234.1"/>
    <property type="molecule type" value="mRNA"/>
</dbReference>
<dbReference type="SMR" id="C9DPL5"/>
<dbReference type="GO" id="GO:0005576">
    <property type="term" value="C:extracellular region"/>
    <property type="evidence" value="ECO:0007669"/>
    <property type="project" value="UniProtKB-SubCell"/>
</dbReference>
<dbReference type="GO" id="GO:0005509">
    <property type="term" value="F:calcium ion binding"/>
    <property type="evidence" value="ECO:0007669"/>
    <property type="project" value="InterPro"/>
</dbReference>
<dbReference type="GO" id="GO:0047498">
    <property type="term" value="F:calcium-dependent phospholipase A2 activity"/>
    <property type="evidence" value="ECO:0007669"/>
    <property type="project" value="TreeGrafter"/>
</dbReference>
<dbReference type="GO" id="GO:0005543">
    <property type="term" value="F:phospholipid binding"/>
    <property type="evidence" value="ECO:0007669"/>
    <property type="project" value="TreeGrafter"/>
</dbReference>
<dbReference type="GO" id="GO:0090729">
    <property type="term" value="F:toxin activity"/>
    <property type="evidence" value="ECO:0007669"/>
    <property type="project" value="UniProtKB-KW"/>
</dbReference>
<dbReference type="GO" id="GO:0050482">
    <property type="term" value="P:arachidonate secretion"/>
    <property type="evidence" value="ECO:0007669"/>
    <property type="project" value="InterPro"/>
</dbReference>
<dbReference type="GO" id="GO:0016042">
    <property type="term" value="P:lipid catabolic process"/>
    <property type="evidence" value="ECO:0007669"/>
    <property type="project" value="UniProtKB-KW"/>
</dbReference>
<dbReference type="GO" id="GO:0042130">
    <property type="term" value="P:negative regulation of T cell proliferation"/>
    <property type="evidence" value="ECO:0007669"/>
    <property type="project" value="TreeGrafter"/>
</dbReference>
<dbReference type="GO" id="GO:0006644">
    <property type="term" value="P:phospholipid metabolic process"/>
    <property type="evidence" value="ECO:0007669"/>
    <property type="project" value="InterPro"/>
</dbReference>
<dbReference type="GO" id="GO:0008217">
    <property type="term" value="P:regulation of blood pressure"/>
    <property type="evidence" value="ECO:0007669"/>
    <property type="project" value="UniProtKB-KW"/>
</dbReference>
<dbReference type="CDD" id="cd00125">
    <property type="entry name" value="PLA2c"/>
    <property type="match status" value="1"/>
</dbReference>
<dbReference type="FunFam" id="1.20.90.10:FF:000001">
    <property type="entry name" value="Basic phospholipase A2 homolog"/>
    <property type="match status" value="1"/>
</dbReference>
<dbReference type="Gene3D" id="1.20.90.10">
    <property type="entry name" value="Phospholipase A2 domain"/>
    <property type="match status" value="1"/>
</dbReference>
<dbReference type="InterPro" id="IPR001211">
    <property type="entry name" value="PLipase_A2"/>
</dbReference>
<dbReference type="InterPro" id="IPR033112">
    <property type="entry name" value="PLipase_A2_Asp_AS"/>
</dbReference>
<dbReference type="InterPro" id="IPR016090">
    <property type="entry name" value="PLipase_A2_dom"/>
</dbReference>
<dbReference type="InterPro" id="IPR036444">
    <property type="entry name" value="PLipase_A2_dom_sf"/>
</dbReference>
<dbReference type="InterPro" id="IPR033113">
    <property type="entry name" value="PLipase_A2_His_AS"/>
</dbReference>
<dbReference type="PANTHER" id="PTHR11716">
    <property type="entry name" value="PHOSPHOLIPASE A2 FAMILY MEMBER"/>
    <property type="match status" value="1"/>
</dbReference>
<dbReference type="PANTHER" id="PTHR11716:SF9">
    <property type="entry name" value="PHOSPHOLIPASE A2, MEMBRANE ASSOCIATED"/>
    <property type="match status" value="1"/>
</dbReference>
<dbReference type="Pfam" id="PF00068">
    <property type="entry name" value="Phospholip_A2_1"/>
    <property type="match status" value="1"/>
</dbReference>
<dbReference type="PRINTS" id="PR00389">
    <property type="entry name" value="PHPHLIPASEA2"/>
</dbReference>
<dbReference type="SMART" id="SM00085">
    <property type="entry name" value="PA2c"/>
    <property type="match status" value="1"/>
</dbReference>
<dbReference type="SUPFAM" id="SSF48619">
    <property type="entry name" value="Phospholipase A2, PLA2"/>
    <property type="match status" value="1"/>
</dbReference>
<dbReference type="PROSITE" id="PS00119">
    <property type="entry name" value="PA2_ASP"/>
    <property type="match status" value="1"/>
</dbReference>
<dbReference type="PROSITE" id="PS00118">
    <property type="entry name" value="PA2_HIS"/>
    <property type="match status" value="1"/>
</dbReference>
<keyword id="KW-0106">Calcium</keyword>
<keyword id="KW-0903">Direct protein sequencing</keyword>
<keyword id="KW-1015">Disulfide bond</keyword>
<keyword id="KW-1199">Hemostasis impairing toxin</keyword>
<keyword id="KW-0378">Hydrolase</keyword>
<keyword id="KW-0382">Hypotensive agent</keyword>
<keyword id="KW-0442">Lipid degradation</keyword>
<keyword id="KW-0443">Lipid metabolism</keyword>
<keyword id="KW-0479">Metal-binding</keyword>
<keyword id="KW-1201">Platelet aggregation inhibiting toxin</keyword>
<keyword id="KW-0964">Secreted</keyword>
<keyword id="KW-0800">Toxin</keyword>
<comment type="function">
    <text evidence="6">Snake venom phospholipase A2 (PLA2) that inhibits collagen/ADP-induced platelet aggregation, and induces hypotension in rats (activity abolished in the presence of p-bromophenacyl bromide). PLA2 catalyzes the calcium-dependent hydrolysis of the 2-acyl groups in 3-sn-phosphoglycerides.</text>
</comment>
<comment type="catalytic activity">
    <reaction evidence="4 5 6">
        <text>a 1,2-diacyl-sn-glycero-3-phosphocholine + H2O = a 1-acyl-sn-glycero-3-phosphocholine + a fatty acid + H(+)</text>
        <dbReference type="Rhea" id="RHEA:15801"/>
        <dbReference type="ChEBI" id="CHEBI:15377"/>
        <dbReference type="ChEBI" id="CHEBI:15378"/>
        <dbReference type="ChEBI" id="CHEBI:28868"/>
        <dbReference type="ChEBI" id="CHEBI:57643"/>
        <dbReference type="ChEBI" id="CHEBI:58168"/>
        <dbReference type="EC" id="3.1.1.4"/>
    </reaction>
</comment>
<comment type="cofactor">
    <cofactor evidence="1">
        <name>Ca(2+)</name>
        <dbReference type="ChEBI" id="CHEBI:29108"/>
    </cofactor>
    <text evidence="1">Binds 1 Ca(2+) ion.</text>
</comment>
<comment type="activity regulation">
    <text evidence="6">Inhibited by EDTA and p-bromophenacyl bromide (BPB).</text>
</comment>
<comment type="subcellular location">
    <subcellularLocation>
        <location>Secreted</location>
    </subcellularLocation>
</comment>
<comment type="tissue specificity">
    <text>Expressed by the venom gland.</text>
</comment>
<comment type="miscellaneous">
    <text evidence="8">Negative results: does not show myotoxic activity.</text>
</comment>
<comment type="similarity">
    <text evidence="7">Belongs to the phospholipase A2 family. Group II subfamily. D49 sub-subfamily.</text>
</comment>
<proteinExistence type="evidence at protein level"/>
<feature type="chain" id="PRO_0000413802" description="Acidic phospholipase A2 BpirPLA2-I">
    <location>
        <begin position="1"/>
        <end position="122"/>
    </location>
</feature>
<feature type="short sequence motif" description="Antiplatelet activity">
    <location>
        <begin position="105"/>
        <end position="117"/>
    </location>
</feature>
<feature type="active site" evidence="3">
    <location>
        <position position="47"/>
    </location>
</feature>
<feature type="active site" evidence="3">
    <location>
        <position position="89"/>
    </location>
</feature>
<feature type="binding site" evidence="2">
    <location>
        <position position="27"/>
    </location>
    <ligand>
        <name>Ca(2+)</name>
        <dbReference type="ChEBI" id="CHEBI:29108"/>
    </ligand>
</feature>
<feature type="binding site" evidence="2">
    <location>
        <position position="29"/>
    </location>
    <ligand>
        <name>Ca(2+)</name>
        <dbReference type="ChEBI" id="CHEBI:29108"/>
    </ligand>
</feature>
<feature type="binding site" evidence="2">
    <location>
        <position position="31"/>
    </location>
    <ligand>
        <name>Ca(2+)</name>
        <dbReference type="ChEBI" id="CHEBI:29108"/>
    </ligand>
</feature>
<feature type="binding site" evidence="2">
    <location>
        <position position="48"/>
    </location>
    <ligand>
        <name>Ca(2+)</name>
        <dbReference type="ChEBI" id="CHEBI:29108"/>
    </ligand>
</feature>
<feature type="disulfide bond" evidence="2">
    <location>
        <begin position="26"/>
        <end position="115"/>
    </location>
</feature>
<feature type="disulfide bond" evidence="2">
    <location>
        <begin position="28"/>
        <end position="44"/>
    </location>
</feature>
<feature type="disulfide bond" evidence="2">
    <location>
        <begin position="43"/>
        <end position="95"/>
    </location>
</feature>
<feature type="disulfide bond" evidence="2">
    <location>
        <begin position="49"/>
        <end position="122"/>
    </location>
</feature>
<feature type="disulfide bond" evidence="2">
    <location>
        <begin position="50"/>
        <end position="88"/>
    </location>
</feature>
<feature type="disulfide bond" evidence="2">
    <location>
        <begin position="57"/>
        <end position="81"/>
    </location>
</feature>
<feature type="disulfide bond" evidence="2">
    <location>
        <begin position="75"/>
        <end position="86"/>
    </location>
</feature>
<organism>
    <name type="scientific">Bothrops pirajai</name>
    <name type="common">Piraja's lancehead</name>
    <dbReference type="NCBI Taxonomy" id="113192"/>
    <lineage>
        <taxon>Eukaryota</taxon>
        <taxon>Metazoa</taxon>
        <taxon>Chordata</taxon>
        <taxon>Craniata</taxon>
        <taxon>Vertebrata</taxon>
        <taxon>Euteleostomi</taxon>
        <taxon>Lepidosauria</taxon>
        <taxon>Squamata</taxon>
        <taxon>Bifurcata</taxon>
        <taxon>Unidentata</taxon>
        <taxon>Episquamata</taxon>
        <taxon>Toxicofera</taxon>
        <taxon>Serpentes</taxon>
        <taxon>Colubroidea</taxon>
        <taxon>Viperidae</taxon>
        <taxon>Crotalinae</taxon>
        <taxon>Bothrops</taxon>
    </lineage>
</organism>
<evidence type="ECO:0000250" key="1"/>
<evidence type="ECO:0000250" key="2">
    <source>
        <dbReference type="UniProtKB" id="O42191"/>
    </source>
</evidence>
<evidence type="ECO:0000250" key="3">
    <source>
        <dbReference type="UniProtKB" id="P06859"/>
    </source>
</evidence>
<evidence type="ECO:0000255" key="4">
    <source>
        <dbReference type="PROSITE-ProRule" id="PRU10035"/>
    </source>
</evidence>
<evidence type="ECO:0000255" key="5">
    <source>
        <dbReference type="PROSITE-ProRule" id="PRU10036"/>
    </source>
</evidence>
<evidence type="ECO:0000269" key="6">
    <source>
    </source>
</evidence>
<evidence type="ECO:0000305" key="7"/>
<evidence type="ECO:0000305" key="8">
    <source>
    </source>
</evidence>
<sequence>NLWQFGKLIMKIAGESGVFKYLSYGCYCGLGGQGQPTDATDRCCFVHDCCYGKVTGCDPKIDSYTYSKENGDVVCGGDDPCKKQICECDRVAATCFRDNKDTYDIKYWFYGAKNCQEESEPC</sequence>
<reference key="1">
    <citation type="journal article" date="2011" name="Arch. Toxicol.">
        <title>Molecular characterization of an acidic phospholipase A(2) from Bothrops pirajai snake venom: synthetic C-terminal peptide identifies its antiplatelet region.</title>
        <authorList>
            <person name="Teixeira S.S."/>
            <person name="Silveira L.B."/>
            <person name="da Silva F.M."/>
            <person name="Marchi-Salvador D.P."/>
            <person name="Silva F.P. Jr."/>
            <person name="Izidoro L.F."/>
            <person name="Fuly A.L."/>
            <person name="Juliano M.A."/>
            <person name="Dos Santos C.R."/>
            <person name="Murakami M.T."/>
            <person name="Sampaio S.V."/>
            <person name="da Silva S.L."/>
            <person name="Soares A.M."/>
        </authorList>
    </citation>
    <scope>NUCLEOTIDE SEQUENCE [MRNA]</scope>
    <scope>PROTEIN SEQUENCE OF 1-61</scope>
    <scope>SYNTHESIS OF 1-14; 61-71 AND 105-117</scope>
    <scope>MOTIF</scope>
    <scope>FUNCTION</scope>
    <scope>CATALYTIC ACTIVITY</scope>
    <scope>COFACTOR</scope>
    <scope>ACTIVITY REGULATION</scope>
    <scope>3D-STRUCTURE MODELING</scope>
    <source>
        <tissue>Venom</tissue>
        <tissue>Venom gland</tissue>
    </source>
</reference>
<accession>C9DPL5</accession>
<name>PA2A1_BOTPI</name>
<protein>
    <recommendedName>
        <fullName>Acidic phospholipase A2 BpirPLA2-I</fullName>
        <shortName>svPLA2</shortName>
        <ecNumber>3.1.1.4</ecNumber>
    </recommendedName>
    <alternativeName>
        <fullName>Phosphatidylcholine 2-acylhydrolase 1B</fullName>
    </alternativeName>
</protein>